<sequence>MSVWTSRKAAEDNDTSLSSGIRAGLQKAVVTLHPEWVRVLQDDSVTLRCQGTYPPGDNSTKWFHNGSLTLQQDANYLIGSAKVKDSGEYTCQTALSMLSDPVNLEVHIGWLLLQTTQRPVFREGDPIRLNCHSWRNTPVYKVTYLQNGKGKKYFHKNSELHIPNATQNHSGSYFCRGIIGRNNKSSETLRITVGDLTSPSTFPPWHQITFCLLIGLLFTIDTVMYFSVQKGLRRSTADYEEPEVHWSKEPENKTISEEKQSFRSSRANSETPENR</sequence>
<evidence type="ECO:0000250" key="1">
    <source>
        <dbReference type="UniProtKB" id="A0A0B4J1G0"/>
    </source>
</evidence>
<evidence type="ECO:0000250" key="2">
    <source>
        <dbReference type="UniProtKB" id="P08637"/>
    </source>
</evidence>
<evidence type="ECO:0000255" key="3"/>
<evidence type="ECO:0000255" key="4">
    <source>
        <dbReference type="PROSITE-ProRule" id="PRU00114"/>
    </source>
</evidence>
<evidence type="ECO:0000255" key="5">
    <source>
        <dbReference type="PROSITE-ProRule" id="PRU00498"/>
    </source>
</evidence>
<evidence type="ECO:0000256" key="6">
    <source>
        <dbReference type="SAM" id="MobiDB-lite"/>
    </source>
</evidence>
<evidence type="ECO:0000269" key="7">
    <source>
    </source>
</evidence>
<evidence type="ECO:0000303" key="8">
    <source>
    </source>
</evidence>
<evidence type="ECO:0000305" key="9"/>
<dbReference type="SMR" id="P0DTI4"/>
<dbReference type="GlyCosmos" id="P0DTI4">
    <property type="glycosylation" value="3 sites, No reported glycans"/>
</dbReference>
<dbReference type="OrthoDB" id="8917564at2759"/>
<dbReference type="Proteomes" id="UP000694386">
    <property type="component" value="Unplaced"/>
</dbReference>
<dbReference type="Proteomes" id="UP001108280">
    <property type="component" value="Unplaced"/>
</dbReference>
<dbReference type="GO" id="GO:0009897">
    <property type="term" value="C:external side of plasma membrane"/>
    <property type="evidence" value="ECO:0007669"/>
    <property type="project" value="TreeGrafter"/>
</dbReference>
<dbReference type="GO" id="GO:0019863">
    <property type="term" value="F:IgE binding"/>
    <property type="evidence" value="ECO:0007669"/>
    <property type="project" value="UniProtKB-KW"/>
</dbReference>
<dbReference type="GO" id="GO:0019864">
    <property type="term" value="F:IgG binding"/>
    <property type="evidence" value="ECO:0007669"/>
    <property type="project" value="UniProtKB-KW"/>
</dbReference>
<dbReference type="GO" id="GO:0019770">
    <property type="term" value="F:IgG receptor activity"/>
    <property type="evidence" value="ECO:0007669"/>
    <property type="project" value="TreeGrafter"/>
</dbReference>
<dbReference type="GO" id="GO:0001788">
    <property type="term" value="P:antibody-dependent cellular cytotoxicity"/>
    <property type="evidence" value="ECO:0007669"/>
    <property type="project" value="TreeGrafter"/>
</dbReference>
<dbReference type="CDD" id="cd05752">
    <property type="entry name" value="Ig1_FcgammaR_like"/>
    <property type="match status" value="1"/>
</dbReference>
<dbReference type="CDD" id="cd05753">
    <property type="entry name" value="Ig2_FcgammaR_like"/>
    <property type="match status" value="1"/>
</dbReference>
<dbReference type="FunFam" id="2.60.40.10:FF:000217">
    <property type="entry name" value="High affinity immunoglobulin gamma Fc receptor I"/>
    <property type="match status" value="1"/>
</dbReference>
<dbReference type="FunFam" id="2.60.40.10:FF:000356">
    <property type="entry name" value="Low affinity immunoglobulin gamma Fc region receptor III-A"/>
    <property type="match status" value="1"/>
</dbReference>
<dbReference type="Gene3D" id="2.60.40.10">
    <property type="entry name" value="Immunoglobulins"/>
    <property type="match status" value="2"/>
</dbReference>
<dbReference type="InterPro" id="IPR007110">
    <property type="entry name" value="Ig-like_dom"/>
</dbReference>
<dbReference type="InterPro" id="IPR036179">
    <property type="entry name" value="Ig-like_dom_sf"/>
</dbReference>
<dbReference type="InterPro" id="IPR013783">
    <property type="entry name" value="Ig-like_fold"/>
</dbReference>
<dbReference type="InterPro" id="IPR050488">
    <property type="entry name" value="Ig_Fc_receptor"/>
</dbReference>
<dbReference type="InterPro" id="IPR003599">
    <property type="entry name" value="Ig_sub"/>
</dbReference>
<dbReference type="InterPro" id="IPR003598">
    <property type="entry name" value="Ig_sub2"/>
</dbReference>
<dbReference type="PANTHER" id="PTHR11481">
    <property type="entry name" value="IMMUNOGLOBULIN FC RECEPTOR"/>
    <property type="match status" value="1"/>
</dbReference>
<dbReference type="PANTHER" id="PTHR11481:SF103">
    <property type="entry name" value="LOW AFFINITY IMMUNOGLOBULIN GAMMA FC REGION RECEPTOR III-A-RELATED"/>
    <property type="match status" value="1"/>
</dbReference>
<dbReference type="Pfam" id="PF13895">
    <property type="entry name" value="Ig_2"/>
    <property type="match status" value="1"/>
</dbReference>
<dbReference type="Pfam" id="PF13927">
    <property type="entry name" value="Ig_3"/>
    <property type="match status" value="1"/>
</dbReference>
<dbReference type="SMART" id="SM00409">
    <property type="entry name" value="IG"/>
    <property type="match status" value="2"/>
</dbReference>
<dbReference type="SMART" id="SM00408">
    <property type="entry name" value="IGc2"/>
    <property type="match status" value="2"/>
</dbReference>
<dbReference type="SUPFAM" id="SSF48726">
    <property type="entry name" value="Immunoglobulin"/>
    <property type="match status" value="2"/>
</dbReference>
<dbReference type="PROSITE" id="PS50835">
    <property type="entry name" value="IG_LIKE"/>
    <property type="match status" value="2"/>
</dbReference>
<accession>P0DTI4</accession>
<gene>
    <name evidence="2" type="primary">FCGR3A</name>
    <name evidence="8" type="synonym">FCGR4</name>
</gene>
<organism>
    <name type="scientific">Cricetulus griseus</name>
    <name type="common">Chinese hamster</name>
    <name type="synonym">Cricetulus barabensis griseus</name>
    <dbReference type="NCBI Taxonomy" id="10029"/>
    <lineage>
        <taxon>Eukaryota</taxon>
        <taxon>Metazoa</taxon>
        <taxon>Chordata</taxon>
        <taxon>Craniata</taxon>
        <taxon>Vertebrata</taxon>
        <taxon>Euteleostomi</taxon>
        <taxon>Mammalia</taxon>
        <taxon>Eutheria</taxon>
        <taxon>Euarchontoglires</taxon>
        <taxon>Glires</taxon>
        <taxon>Rodentia</taxon>
        <taxon>Myomorpha</taxon>
        <taxon>Muroidea</taxon>
        <taxon>Cricetidae</taxon>
        <taxon>Cricetinae</taxon>
        <taxon>Cricetulus</taxon>
    </lineage>
</organism>
<proteinExistence type="inferred from homology"/>
<feature type="signal peptide" evidence="3">
    <location>
        <begin position="1"/>
        <end position="23"/>
    </location>
</feature>
<feature type="chain" id="PRO_0000454796" description="Low affinity immunoglobulin gamma Fc region receptor III-A">
    <location>
        <begin position="24"/>
        <end position="275"/>
    </location>
</feature>
<feature type="topological domain" description="Extracellular" evidence="9">
    <location>
        <begin position="24"/>
        <end position="207"/>
    </location>
</feature>
<feature type="transmembrane region" description="Helical" evidence="3">
    <location>
        <begin position="208"/>
        <end position="228"/>
    </location>
</feature>
<feature type="topological domain" description="Cytoplasmic" evidence="9">
    <location>
        <begin position="229"/>
        <end position="275"/>
    </location>
</feature>
<feature type="domain" description="Ig-like C2-type 1" evidence="4">
    <location>
        <begin position="28"/>
        <end position="92"/>
    </location>
</feature>
<feature type="domain" description="Ig-like C2-type 2" evidence="4">
    <location>
        <begin position="101"/>
        <end position="192"/>
    </location>
</feature>
<feature type="region of interest" description="Disordered" evidence="6">
    <location>
        <begin position="237"/>
        <end position="275"/>
    </location>
</feature>
<feature type="compositionally biased region" description="Basic and acidic residues" evidence="6">
    <location>
        <begin position="242"/>
        <end position="261"/>
    </location>
</feature>
<feature type="compositionally biased region" description="Polar residues" evidence="6">
    <location>
        <begin position="262"/>
        <end position="275"/>
    </location>
</feature>
<feature type="modified residue" description="Phosphotyrosine" evidence="1">
    <location>
        <position position="239"/>
    </location>
</feature>
<feature type="glycosylation site" description="N-linked (GlcNAc...) asparagine" evidence="5">
    <location>
        <position position="65"/>
    </location>
</feature>
<feature type="glycosylation site" description="N-linked (GlcNAc...) asparagine" evidence="5">
    <location>
        <position position="168"/>
    </location>
</feature>
<feature type="glycosylation site" description="N-linked (GlcNAc...) asparagine" evidence="5">
    <location>
        <position position="183"/>
    </location>
</feature>
<feature type="disulfide bond" evidence="4">
    <location>
        <begin position="49"/>
        <end position="91"/>
    </location>
</feature>
<feature type="disulfide bond" evidence="4">
    <location>
        <begin position="131"/>
        <end position="175"/>
    </location>
</feature>
<name>FCG3A_CRIGR</name>
<comment type="function">
    <text evidence="1 7">Receptor for the invariable Fc fragment of immunoglobulin gamma (IgG). Binds with intermediate affinity to both IgG2a and IgG2b. Can bind to IgG2a and IgG2b monomers. Does not display binding to IgG1 or IgG3 (By similarity). Recognizes neutralizing virus-specific IgGs displayed on the cell surface of infected cells and triggers antibody-dependent cellular cytotoxicity (ADCC). Confers protection to lethal influenza virus infection (By similarity). On splenic dendritic cells, uptakes antigen immune complexes and efficiently divert them into MHC class I and II antigen presentation pathways to provide for superior priming of CD4-positive and CD8-positive T cell immune responses (By similarity). Mediates neutrophil activation by IgG complexes redundantly with FCGR2A (By similarity). Plays a role in promoting bone resorption by enhancing osteoclast differentiation following binding to IgG2a (By similarity). Also acts as a receptor for the Fc region of immunoglobulin epsilon (IgE). Binds with low affinity to both the a and b allotypes of IgE. Has also been shown to bind to IgE allotype a only but not to allotype b. Binds aggregated IgE but not the monomeric form and bound monomeric IgG is readily displaced by IgE complexes. Binding to IgE promotes macrophage-mediated phagocytosis, antigen presentation to T cells, production of pro-inflammatory cytokines and the late phase of cutaneous allergic reactions (By similarity). Mediates enhanced ADCC in response to afucosylated IgGs (PubMed:34485821).</text>
</comment>
<comment type="subunit">
    <text evidence="1">Forms a heterooligomeric complex with ITAM-containing signaling subunits FCER1G. Interacts (via transmembrane domain) with signaling subunits; this interaction is a prerequisite for receptor complex expression on the cell surface and intracellular signal transduction. Binds the Fc region of antigen-complexed IgG.</text>
</comment>
<comment type="subcellular location">
    <subcellularLocation>
        <location evidence="1">Cell membrane</location>
        <topology evidence="3">Single-pass type I membrane protein</topology>
    </subcellularLocation>
</comment>
<comment type="PTM">
    <text evidence="1">N-glycosylated.</text>
</comment>
<comment type="PTM">
    <text evidence="1">Phosphorylated following receptor ligation.</text>
</comment>
<protein>
    <recommendedName>
        <fullName evidence="2">Low affinity immunoglobulin gamma Fc region receptor III-A</fullName>
        <shortName>IgG Fc receptor III-A</shortName>
    </recommendedName>
    <alternativeName>
        <fullName evidence="1">CD16-2</fullName>
    </alternativeName>
    <alternativeName>
        <fullName evidence="8">FcgammaRIV</fullName>
    </alternativeName>
    <cdAntigenName>CD16a</cdAntigenName>
</protein>
<reference key="1">
    <citation type="journal article" date="2018" name="Biotechnol. Bioeng.">
        <title>A reference genome of the Chinese hamster based on a hybrid assembly strategy.</title>
        <authorList>
            <person name="Rupp O."/>
            <person name="MacDonald M.L."/>
            <person name="Li S."/>
            <person name="Dhiman H."/>
            <person name="Polson S."/>
            <person name="Griep S."/>
            <person name="Heffner K."/>
            <person name="Hernandez I."/>
            <person name="Brinkrolf K."/>
            <person name="Jadhav V."/>
            <person name="Samoudi M."/>
            <person name="Hao H."/>
            <person name="Kingham B."/>
            <person name="Goesmann A."/>
            <person name="Betenbaugh M.J."/>
            <person name="Lewis N.E."/>
            <person name="Borth N."/>
            <person name="Lee K.H."/>
        </authorList>
    </citation>
    <scope>NUCLEOTIDE SEQUENCE [LARGE SCALE GENOMIC DNA]</scope>
</reference>
<reference key="2">
    <citation type="journal article" date="2020" name="Biotechnol. Bioeng.">
        <title>Chromosome-scale scaffolds for the Chinese hamster reference genome assembly to facilitate the study of the CHO epigenome.</title>
        <authorList>
            <person name="Hilliard W."/>
            <person name="MacDonald M.L."/>
            <person name="Lee K.H."/>
        </authorList>
    </citation>
    <scope>NUCLEOTIDE SEQUENCE [LARGE SCALE GENOMIC DNA]</scope>
</reference>
<reference key="3">
    <citation type="journal article" date="1994" name="Bull. World Health Organ.">
        <title>Nomenclature of Fc receptors. IUIS/WHO Subcommittee on Nomenclature of Fc receptors.</title>
        <authorList>
            <person name="Conrad D."/>
            <person name="Cooper M."/>
            <person name="Fridman W.H."/>
            <person name="Kinet J.P."/>
            <person name="Ravetch J."/>
        </authorList>
    </citation>
    <scope>NOMENCLATURE</scope>
</reference>
<reference key="4">
    <citation type="journal article" date="2021" name="Antib Ther">
        <title>Cross-species higher sensitivities of FcgammaRIIIA/FcgammaRIV to afucosylated IgG for enhanced ADCC.</title>
        <authorList>
            <person name="Mao C."/>
            <person name="Near R."/>
            <person name="Zhong X."/>
            <person name="Gao W."/>
        </authorList>
    </citation>
    <scope>FUNCTION</scope>
</reference>
<keyword id="KW-1003">Cell membrane</keyword>
<keyword id="KW-1015">Disulfide bond</keyword>
<keyword id="KW-0325">Glycoprotein</keyword>
<keyword id="KW-0389">IgE-binding protein</keyword>
<keyword id="KW-0390">IgG-binding protein</keyword>
<keyword id="KW-0391">Immunity</keyword>
<keyword id="KW-0393">Immunoglobulin domain</keyword>
<keyword id="KW-0472">Membrane</keyword>
<keyword id="KW-0597">Phosphoprotein</keyword>
<keyword id="KW-0677">Repeat</keyword>
<keyword id="KW-0732">Signal</keyword>
<keyword id="KW-0812">Transmembrane</keyword>
<keyword id="KW-1133">Transmembrane helix</keyword>